<name>DEF6_TRIKH</name>
<proteinExistence type="evidence at protein level"/>
<dbReference type="SMR" id="P84967"/>
<dbReference type="GO" id="GO:0050832">
    <property type="term" value="P:defense response to fungus"/>
    <property type="evidence" value="ECO:0007669"/>
    <property type="project" value="UniProtKB-KW"/>
</dbReference>
<dbReference type="GO" id="GO:0031640">
    <property type="term" value="P:killing of cells of another organism"/>
    <property type="evidence" value="ECO:0007669"/>
    <property type="project" value="UniProtKB-KW"/>
</dbReference>
<dbReference type="Gene3D" id="3.30.30.10">
    <property type="entry name" value="Knottin, scorpion toxin-like"/>
    <property type="match status" value="1"/>
</dbReference>
<dbReference type="InterPro" id="IPR008176">
    <property type="entry name" value="Defensin_plant"/>
</dbReference>
<dbReference type="InterPro" id="IPR003614">
    <property type="entry name" value="Scorpion_toxin-like"/>
</dbReference>
<dbReference type="InterPro" id="IPR036574">
    <property type="entry name" value="Scorpion_toxin-like_sf"/>
</dbReference>
<dbReference type="Pfam" id="PF00304">
    <property type="entry name" value="Gamma-thionin"/>
    <property type="match status" value="1"/>
</dbReference>
<dbReference type="PRINTS" id="PR00288">
    <property type="entry name" value="PUROTHIONIN"/>
</dbReference>
<dbReference type="SMART" id="SM00505">
    <property type="entry name" value="Knot1"/>
    <property type="match status" value="1"/>
</dbReference>
<dbReference type="SUPFAM" id="SSF57095">
    <property type="entry name" value="Scorpion toxin-like"/>
    <property type="match status" value="1"/>
</dbReference>
<dbReference type="PROSITE" id="PS00940">
    <property type="entry name" value="GAMMA_THIONIN"/>
    <property type="match status" value="1"/>
</dbReference>
<comment type="function">
    <text evidence="1">Plant defense peptide.</text>
</comment>
<comment type="mass spectrometry"/>
<comment type="similarity">
    <text evidence="3">Belongs to the DEFL family.</text>
</comment>
<sequence>RDCRSQSKTFVGLCVSDTNCASVCLTEHFPGGKCDGYRRCFCTKDC</sequence>
<reference evidence="3" key="1">
    <citation type="journal article" date="2007" name="Biochimie">
        <title>Seed defensins from T. kiharae and related species: Genome localization of defensin-encoding genes.</title>
        <authorList>
            <person name="Odintsova T.I."/>
            <person name="Egorov T.A."/>
            <person name="Musolyamov A.K."/>
            <person name="Odintsova M.S."/>
            <person name="Pukhalsky V.A."/>
            <person name="Grishin E.V."/>
        </authorList>
    </citation>
    <scope>PROTEIN SEQUENCE</scope>
    <scope>MASS SPECTROMETRY</scope>
    <source>
        <tissue evidence="2">Seed</tissue>
    </source>
</reference>
<keyword id="KW-0929">Antimicrobial</keyword>
<keyword id="KW-0903">Direct protein sequencing</keyword>
<keyword id="KW-1015">Disulfide bond</keyword>
<keyword id="KW-0295">Fungicide</keyword>
<keyword id="KW-0611">Plant defense</keyword>
<organism>
    <name type="scientific">Triticum kiharae</name>
    <name type="common">Wheat</name>
    <dbReference type="NCBI Taxonomy" id="376535"/>
    <lineage>
        <taxon>Eukaryota</taxon>
        <taxon>Viridiplantae</taxon>
        <taxon>Streptophyta</taxon>
        <taxon>Embryophyta</taxon>
        <taxon>Tracheophyta</taxon>
        <taxon>Spermatophyta</taxon>
        <taxon>Magnoliopsida</taxon>
        <taxon>Liliopsida</taxon>
        <taxon>Poales</taxon>
        <taxon>Poaceae</taxon>
        <taxon>BOP clade</taxon>
        <taxon>Pooideae</taxon>
        <taxon>Triticodae</taxon>
        <taxon>Triticeae</taxon>
        <taxon>Triticinae</taxon>
        <taxon>Triticum</taxon>
    </lineage>
</organism>
<accession>P84967</accession>
<protein>
    <recommendedName>
        <fullName>Defensin Tk-AMP-D6</fullName>
    </recommendedName>
</protein>
<feature type="chain" id="PRO_0000287895" description="Defensin Tk-AMP-D6">
    <location>
        <begin position="1"/>
        <end position="46"/>
    </location>
</feature>
<feature type="disulfide bond" evidence="1">
    <location>
        <begin position="3"/>
        <end position="46"/>
    </location>
</feature>
<feature type="disulfide bond" evidence="1">
    <location>
        <begin position="14"/>
        <end position="34"/>
    </location>
</feature>
<feature type="disulfide bond" evidence="1">
    <location>
        <begin position="20"/>
        <end position="40"/>
    </location>
</feature>
<feature type="disulfide bond" evidence="1">
    <location>
        <begin position="24"/>
        <end position="42"/>
    </location>
</feature>
<evidence type="ECO:0000250" key="1">
    <source>
        <dbReference type="UniProtKB" id="Q8GTM0"/>
    </source>
</evidence>
<evidence type="ECO:0000269" key="2">
    <source>
    </source>
</evidence>
<evidence type="ECO:0000305" key="3"/>